<dbReference type="EC" id="1.1.1.8"/>
<dbReference type="EMBL" id="AJ347019">
    <property type="protein sequence ID" value="CAC69665.1"/>
    <property type="molecule type" value="mRNA"/>
</dbReference>
<dbReference type="EMBL" id="AC002510">
    <property type="protein sequence ID" value="AAB84336.1"/>
    <property type="molecule type" value="Genomic_DNA"/>
</dbReference>
<dbReference type="EMBL" id="CP002685">
    <property type="protein sequence ID" value="AEC09996.1"/>
    <property type="molecule type" value="Genomic_DNA"/>
</dbReference>
<dbReference type="EMBL" id="CP002685">
    <property type="protein sequence ID" value="AEC09997.1"/>
    <property type="molecule type" value="Genomic_DNA"/>
</dbReference>
<dbReference type="EMBL" id="CP002685">
    <property type="protein sequence ID" value="AEC09998.1"/>
    <property type="molecule type" value="Genomic_DNA"/>
</dbReference>
<dbReference type="EMBL" id="CP002685">
    <property type="protein sequence ID" value="ANM63134.1"/>
    <property type="molecule type" value="Genomic_DNA"/>
</dbReference>
<dbReference type="EMBL" id="AY063920">
    <property type="protein sequence ID" value="AAL36276.1"/>
    <property type="molecule type" value="mRNA"/>
</dbReference>
<dbReference type="EMBL" id="AY091247">
    <property type="protein sequence ID" value="AAM14186.1"/>
    <property type="molecule type" value="mRNA"/>
</dbReference>
<dbReference type="EMBL" id="AK317356">
    <property type="protein sequence ID" value="BAH20028.1"/>
    <property type="molecule type" value="mRNA"/>
</dbReference>
<dbReference type="PIR" id="T00810">
    <property type="entry name" value="T00810"/>
</dbReference>
<dbReference type="RefSeq" id="NP_001031525.1">
    <property type="nucleotide sequence ID" value="NM_001036448.2"/>
</dbReference>
<dbReference type="RefSeq" id="NP_001325243.1">
    <property type="nucleotide sequence ID" value="NM_001336924.1"/>
</dbReference>
<dbReference type="RefSeq" id="NP_181685.1">
    <property type="nucleotide sequence ID" value="NM_129717.5"/>
</dbReference>
<dbReference type="RefSeq" id="NP_850352.1">
    <property type="nucleotide sequence ID" value="NM_180021.5"/>
</dbReference>
<dbReference type="SMR" id="O22216"/>
<dbReference type="BioGRID" id="4089">
    <property type="interactions" value="3"/>
</dbReference>
<dbReference type="FunCoup" id="O22216">
    <property type="interactions" value="794"/>
</dbReference>
<dbReference type="STRING" id="3702.O22216"/>
<dbReference type="PaxDb" id="3702-AT2G41540.2"/>
<dbReference type="ProteomicsDB" id="248507"/>
<dbReference type="EnsemblPlants" id="AT2G41540.1">
    <property type="protein sequence ID" value="AT2G41540.1"/>
    <property type="gene ID" value="AT2G41540"/>
</dbReference>
<dbReference type="EnsemblPlants" id="AT2G41540.2">
    <property type="protein sequence ID" value="AT2G41540.2"/>
    <property type="gene ID" value="AT2G41540"/>
</dbReference>
<dbReference type="EnsemblPlants" id="AT2G41540.3">
    <property type="protein sequence ID" value="AT2G41540.3"/>
    <property type="gene ID" value="AT2G41540"/>
</dbReference>
<dbReference type="EnsemblPlants" id="AT2G41540.4">
    <property type="protein sequence ID" value="AT2G41540.4"/>
    <property type="gene ID" value="AT2G41540"/>
</dbReference>
<dbReference type="GeneID" id="818752"/>
<dbReference type="Gramene" id="AT2G41540.1">
    <property type="protein sequence ID" value="AT2G41540.1"/>
    <property type="gene ID" value="AT2G41540"/>
</dbReference>
<dbReference type="Gramene" id="AT2G41540.2">
    <property type="protein sequence ID" value="AT2G41540.2"/>
    <property type="gene ID" value="AT2G41540"/>
</dbReference>
<dbReference type="Gramene" id="AT2G41540.3">
    <property type="protein sequence ID" value="AT2G41540.3"/>
    <property type="gene ID" value="AT2G41540"/>
</dbReference>
<dbReference type="Gramene" id="AT2G41540.4">
    <property type="protein sequence ID" value="AT2G41540.4"/>
    <property type="gene ID" value="AT2G41540"/>
</dbReference>
<dbReference type="KEGG" id="ath:AT2G41540"/>
<dbReference type="Araport" id="AT2G41540"/>
<dbReference type="TAIR" id="AT2G41540">
    <property type="gene designation" value="GPDHC1"/>
</dbReference>
<dbReference type="eggNOG" id="KOG2711">
    <property type="taxonomic scope" value="Eukaryota"/>
</dbReference>
<dbReference type="HOGENOM" id="CLU_029303_2_0_1"/>
<dbReference type="InParanoid" id="O22216"/>
<dbReference type="OMA" id="SKCSAQH"/>
<dbReference type="OrthoDB" id="10263760at2759"/>
<dbReference type="PhylomeDB" id="O22216"/>
<dbReference type="BioCyc" id="ARA:AT2G41540-MONOMER"/>
<dbReference type="BRENDA" id="1.1.1.8">
    <property type="organism ID" value="399"/>
</dbReference>
<dbReference type="PRO" id="PR:O22216"/>
<dbReference type="Proteomes" id="UP000006548">
    <property type="component" value="Chromosome 2"/>
</dbReference>
<dbReference type="ExpressionAtlas" id="O22216">
    <property type="expression patterns" value="baseline and differential"/>
</dbReference>
<dbReference type="GO" id="GO:0005829">
    <property type="term" value="C:cytosol"/>
    <property type="evidence" value="ECO:0000314"/>
    <property type="project" value="TAIR"/>
</dbReference>
<dbReference type="GO" id="GO:0141152">
    <property type="term" value="F:glycerol-3-phosphate dehydrogenase (NAD+) activity"/>
    <property type="evidence" value="ECO:0007669"/>
    <property type="project" value="UniProtKB-EC"/>
</dbReference>
<dbReference type="GO" id="GO:0051287">
    <property type="term" value="F:NAD binding"/>
    <property type="evidence" value="ECO:0000304"/>
    <property type="project" value="TAIR"/>
</dbReference>
<dbReference type="GO" id="GO:0005975">
    <property type="term" value="P:carbohydrate metabolic process"/>
    <property type="evidence" value="ECO:0007669"/>
    <property type="project" value="InterPro"/>
</dbReference>
<dbReference type="GO" id="GO:0046168">
    <property type="term" value="P:glycerol-3-phosphate catabolic process"/>
    <property type="evidence" value="ECO:0007669"/>
    <property type="project" value="InterPro"/>
</dbReference>
<dbReference type="FunFam" id="1.10.1040.10:FF:000012">
    <property type="entry name" value="Glycerol-3-phosphate dehydrogenase [NAD(+)]"/>
    <property type="match status" value="1"/>
</dbReference>
<dbReference type="FunFam" id="3.40.50.720:FF:000109">
    <property type="entry name" value="Glycerol-3-phosphate dehydrogenase [NAD(+)]"/>
    <property type="match status" value="1"/>
</dbReference>
<dbReference type="FunFam" id="3.40.50.720:FF:000229">
    <property type="entry name" value="Glycerol-3-phosphate dehydrogenase [NAD(+)]"/>
    <property type="match status" value="1"/>
</dbReference>
<dbReference type="Gene3D" id="1.10.1040.10">
    <property type="entry name" value="N-(1-d-carboxylethyl)-l-norvaline Dehydrogenase, domain 2"/>
    <property type="match status" value="1"/>
</dbReference>
<dbReference type="Gene3D" id="3.40.50.720">
    <property type="entry name" value="NAD(P)-binding Rossmann-like Domain"/>
    <property type="match status" value="2"/>
</dbReference>
<dbReference type="InterPro" id="IPR008927">
    <property type="entry name" value="6-PGluconate_DH-like_C_sf"/>
</dbReference>
<dbReference type="InterPro" id="IPR013328">
    <property type="entry name" value="6PGD_dom2"/>
</dbReference>
<dbReference type="InterPro" id="IPR006168">
    <property type="entry name" value="G3P_DH_NAD-dep"/>
</dbReference>
<dbReference type="InterPro" id="IPR006109">
    <property type="entry name" value="G3P_DH_NAD-dep_C"/>
</dbReference>
<dbReference type="InterPro" id="IPR011128">
    <property type="entry name" value="G3P_DH_NAD-dep_N"/>
</dbReference>
<dbReference type="InterPro" id="IPR036291">
    <property type="entry name" value="NAD(P)-bd_dom_sf"/>
</dbReference>
<dbReference type="PANTHER" id="PTHR11728">
    <property type="entry name" value="GLYCEROL-3-PHOSPHATE DEHYDROGENASE"/>
    <property type="match status" value="1"/>
</dbReference>
<dbReference type="PANTHER" id="PTHR11728:SF30">
    <property type="entry name" value="GLYCEROL-3-PHOSPHATE DEHYDROGENASE [NAD(+)] GPDHC1, CYTOSOLIC"/>
    <property type="match status" value="1"/>
</dbReference>
<dbReference type="Pfam" id="PF07479">
    <property type="entry name" value="NAD_Gly3P_dh_C"/>
    <property type="match status" value="1"/>
</dbReference>
<dbReference type="Pfam" id="PF01210">
    <property type="entry name" value="NAD_Gly3P_dh_N"/>
    <property type="match status" value="1"/>
</dbReference>
<dbReference type="PRINTS" id="PR00077">
    <property type="entry name" value="GPDHDRGNASE"/>
</dbReference>
<dbReference type="SUPFAM" id="SSF48179">
    <property type="entry name" value="6-phosphogluconate dehydrogenase C-terminal domain-like"/>
    <property type="match status" value="1"/>
</dbReference>
<dbReference type="SUPFAM" id="SSF51735">
    <property type="entry name" value="NAD(P)-binding Rossmann-fold domains"/>
    <property type="match status" value="1"/>
</dbReference>
<keyword id="KW-0963">Cytoplasm</keyword>
<keyword id="KW-0520">NAD</keyword>
<keyword id="KW-0560">Oxidoreductase</keyword>
<keyword id="KW-1185">Reference proteome</keyword>
<keyword id="KW-0346">Stress response</keyword>
<accession>O22216</accession>
<accession>B9DH11</accession>
<comment type="function">
    <text evidence="2">Involved in cell redox homeostasis. Required for maintaining a steady state cellular NADH/NAD(+) ratio through a mitochondrial glycerol-3-phosphate redox shuttle. May function with the mitochondrial FAD-dependent glycerol-3-phosphate dehydrogenase SDP6 to shuttle reducing equivalents into the mitochondria for respiration.</text>
</comment>
<comment type="catalytic activity">
    <reaction>
        <text>sn-glycerol 3-phosphate + NAD(+) = dihydroxyacetone phosphate + NADH + H(+)</text>
        <dbReference type="Rhea" id="RHEA:11092"/>
        <dbReference type="ChEBI" id="CHEBI:15378"/>
        <dbReference type="ChEBI" id="CHEBI:57540"/>
        <dbReference type="ChEBI" id="CHEBI:57597"/>
        <dbReference type="ChEBI" id="CHEBI:57642"/>
        <dbReference type="ChEBI" id="CHEBI:57945"/>
        <dbReference type="EC" id="1.1.1.8"/>
    </reaction>
</comment>
<comment type="subcellular location">
    <subcellularLocation>
        <location evidence="1">Cytoplasm</location>
        <location evidence="1">Cytosol</location>
    </subcellularLocation>
</comment>
<comment type="tissue specificity">
    <text evidence="2">Expressed in roots, leaves, flowers and siliques.</text>
</comment>
<comment type="induction">
    <text evidence="2">By abscisic acid and salt and dehydration treatments. Down-regulated by hypoxia.</text>
</comment>
<comment type="disruption phenotype">
    <text evidence="2">No visible phenotype under normal growth conditions, but mutant plants have increased NADH/NAD(+) ratios, decreased levels of glycerol-3-phosphate, and produce constitutive high levels of reactive oxygen species (ROS).</text>
</comment>
<comment type="similarity">
    <text evidence="3">Belongs to the NAD-dependent glycerol-3-phosphate dehydrogenase family.</text>
</comment>
<protein>
    <recommendedName>
        <fullName>Glycerol-3-phosphate dehydrogenase [NAD(+)] GPDHC1, cytosolic</fullName>
        <ecNumber>1.1.1.8</ecNumber>
    </recommendedName>
</protein>
<proteinExistence type="evidence at transcript level"/>
<organism>
    <name type="scientific">Arabidopsis thaliana</name>
    <name type="common">Mouse-ear cress</name>
    <dbReference type="NCBI Taxonomy" id="3702"/>
    <lineage>
        <taxon>Eukaryota</taxon>
        <taxon>Viridiplantae</taxon>
        <taxon>Streptophyta</taxon>
        <taxon>Embryophyta</taxon>
        <taxon>Tracheophyta</taxon>
        <taxon>Spermatophyta</taxon>
        <taxon>Magnoliopsida</taxon>
        <taxon>eudicotyledons</taxon>
        <taxon>Gunneridae</taxon>
        <taxon>Pentapetalae</taxon>
        <taxon>rosids</taxon>
        <taxon>malvids</taxon>
        <taxon>Brassicales</taxon>
        <taxon>Brassicaceae</taxon>
        <taxon>Camelineae</taxon>
        <taxon>Arabidopsis</taxon>
    </lineage>
</organism>
<reference key="1">
    <citation type="journal article" date="2006" name="Plant Cell">
        <title>Involvement of a glycerol-3-phosphate dehydrogenase in modulating the NADH/NAD+ ratio provides evidence of a mitochondrial glycerol-3-phosphate shuttle in Arabidopsis.</title>
        <authorList>
            <person name="Shen W."/>
            <person name="Wei Y."/>
            <person name="Dauk M."/>
            <person name="Tan Y."/>
            <person name="Taylor D.C."/>
            <person name="Selvaraj G."/>
            <person name="Zou J."/>
        </authorList>
    </citation>
    <scope>NUCLEOTIDE SEQUENCE [MRNA]</scope>
    <scope>FUNCTION</scope>
    <scope>TISSUE SPECIFICITY</scope>
    <scope>INDUCTION</scope>
    <scope>DISRUPTION PHENOTYPE</scope>
</reference>
<reference key="2">
    <citation type="journal article" date="1999" name="Nature">
        <title>Sequence and analysis of chromosome 2 of the plant Arabidopsis thaliana.</title>
        <authorList>
            <person name="Lin X."/>
            <person name="Kaul S."/>
            <person name="Rounsley S.D."/>
            <person name="Shea T.P."/>
            <person name="Benito M.-I."/>
            <person name="Town C.D."/>
            <person name="Fujii C.Y."/>
            <person name="Mason T.M."/>
            <person name="Bowman C.L."/>
            <person name="Barnstead M.E."/>
            <person name="Feldblyum T.V."/>
            <person name="Buell C.R."/>
            <person name="Ketchum K.A."/>
            <person name="Lee J.J."/>
            <person name="Ronning C.M."/>
            <person name="Koo H.L."/>
            <person name="Moffat K.S."/>
            <person name="Cronin L.A."/>
            <person name="Shen M."/>
            <person name="Pai G."/>
            <person name="Van Aken S."/>
            <person name="Umayam L."/>
            <person name="Tallon L.J."/>
            <person name="Gill J.E."/>
            <person name="Adams M.D."/>
            <person name="Carrera A.J."/>
            <person name="Creasy T.H."/>
            <person name="Goodman H.M."/>
            <person name="Somerville C.R."/>
            <person name="Copenhaver G.P."/>
            <person name="Preuss D."/>
            <person name="Nierman W.C."/>
            <person name="White O."/>
            <person name="Eisen J.A."/>
            <person name="Salzberg S.L."/>
            <person name="Fraser C.M."/>
            <person name="Venter J.C."/>
        </authorList>
    </citation>
    <scope>NUCLEOTIDE SEQUENCE [LARGE SCALE GENOMIC DNA]</scope>
    <source>
        <strain>cv. Columbia</strain>
    </source>
</reference>
<reference key="3">
    <citation type="journal article" date="2017" name="Plant J.">
        <title>Araport11: a complete reannotation of the Arabidopsis thaliana reference genome.</title>
        <authorList>
            <person name="Cheng C.Y."/>
            <person name="Krishnakumar V."/>
            <person name="Chan A.P."/>
            <person name="Thibaud-Nissen F."/>
            <person name="Schobel S."/>
            <person name="Town C.D."/>
        </authorList>
    </citation>
    <scope>GENOME REANNOTATION</scope>
    <source>
        <strain>cv. Columbia</strain>
    </source>
</reference>
<reference key="4">
    <citation type="journal article" date="2003" name="Science">
        <title>Empirical analysis of transcriptional activity in the Arabidopsis genome.</title>
        <authorList>
            <person name="Yamada K."/>
            <person name="Lim J."/>
            <person name="Dale J.M."/>
            <person name="Chen H."/>
            <person name="Shinn P."/>
            <person name="Palm C.J."/>
            <person name="Southwick A.M."/>
            <person name="Wu H.C."/>
            <person name="Kim C.J."/>
            <person name="Nguyen M."/>
            <person name="Pham P.K."/>
            <person name="Cheuk R.F."/>
            <person name="Karlin-Newmann G."/>
            <person name="Liu S.X."/>
            <person name="Lam B."/>
            <person name="Sakano H."/>
            <person name="Wu T."/>
            <person name="Yu G."/>
            <person name="Miranda M."/>
            <person name="Quach H.L."/>
            <person name="Tripp M."/>
            <person name="Chang C.H."/>
            <person name="Lee J.M."/>
            <person name="Toriumi M.J."/>
            <person name="Chan M.M."/>
            <person name="Tang C.C."/>
            <person name="Onodera C.S."/>
            <person name="Deng J.M."/>
            <person name="Akiyama K."/>
            <person name="Ansari Y."/>
            <person name="Arakawa T."/>
            <person name="Banh J."/>
            <person name="Banno F."/>
            <person name="Bowser L."/>
            <person name="Brooks S.Y."/>
            <person name="Carninci P."/>
            <person name="Chao Q."/>
            <person name="Choy N."/>
            <person name="Enju A."/>
            <person name="Goldsmith A.D."/>
            <person name="Gurjal M."/>
            <person name="Hansen N.F."/>
            <person name="Hayashizaki Y."/>
            <person name="Johnson-Hopson C."/>
            <person name="Hsuan V.W."/>
            <person name="Iida K."/>
            <person name="Karnes M."/>
            <person name="Khan S."/>
            <person name="Koesema E."/>
            <person name="Ishida J."/>
            <person name="Jiang P.X."/>
            <person name="Jones T."/>
            <person name="Kawai J."/>
            <person name="Kamiya A."/>
            <person name="Meyers C."/>
            <person name="Nakajima M."/>
            <person name="Narusaka M."/>
            <person name="Seki M."/>
            <person name="Sakurai T."/>
            <person name="Satou M."/>
            <person name="Tamse R."/>
            <person name="Vaysberg M."/>
            <person name="Wallender E.K."/>
            <person name="Wong C."/>
            <person name="Yamamura Y."/>
            <person name="Yuan S."/>
            <person name="Shinozaki K."/>
            <person name="Davis R.W."/>
            <person name="Theologis A."/>
            <person name="Ecker J.R."/>
        </authorList>
    </citation>
    <scope>NUCLEOTIDE SEQUENCE [LARGE SCALE MRNA]</scope>
    <source>
        <strain>cv. Columbia</strain>
    </source>
</reference>
<reference key="5">
    <citation type="journal article" date="2009" name="DNA Res.">
        <title>Analysis of multiple occurrences of alternative splicing events in Arabidopsis thaliana using novel sequenced full-length cDNAs.</title>
        <authorList>
            <person name="Iida K."/>
            <person name="Fukami-Kobayashi K."/>
            <person name="Toyoda A."/>
            <person name="Sakaki Y."/>
            <person name="Kobayashi M."/>
            <person name="Seki M."/>
            <person name="Shinozaki K."/>
        </authorList>
    </citation>
    <scope>NUCLEOTIDE SEQUENCE [LARGE SCALE MRNA]</scope>
    <source>
        <strain>cv. Columbia</strain>
        <tissue>Rosette leaf</tissue>
    </source>
</reference>
<name>GPDHC_ARATH</name>
<gene>
    <name type="primary">GPDHC1</name>
    <name type="ordered locus">At2g41540</name>
</gene>
<feature type="chain" id="PRO_0000420176" description="Glycerol-3-phosphate dehydrogenase [NAD(+)] GPDHC1, cytosolic">
    <location>
        <begin position="1"/>
        <end position="462"/>
    </location>
</feature>
<feature type="active site" description="Proton acceptor" evidence="1">
    <location>
        <position position="285"/>
    </location>
</feature>
<feature type="binding site" evidence="1">
    <location>
        <begin position="48"/>
        <end position="53"/>
    </location>
    <ligand>
        <name>NAD(+)</name>
        <dbReference type="ChEBI" id="CHEBI:57540"/>
    </ligand>
</feature>
<feature type="binding site" evidence="1">
    <location>
        <position position="196"/>
    </location>
    <ligand>
        <name>NAD(+)</name>
        <dbReference type="ChEBI" id="CHEBI:57540"/>
    </ligand>
</feature>
<feature type="binding site" evidence="1">
    <location>
        <position position="196"/>
    </location>
    <ligand>
        <name>substrate</name>
    </ligand>
</feature>
<feature type="binding site" evidence="1">
    <location>
        <position position="235"/>
    </location>
    <ligand>
        <name>NAD(+)</name>
        <dbReference type="ChEBI" id="CHEBI:57540"/>
    </ligand>
</feature>
<feature type="binding site" evidence="1">
    <location>
        <begin position="347"/>
        <end position="348"/>
    </location>
    <ligand>
        <name>substrate</name>
    </ligand>
</feature>
<feature type="binding site" evidence="1">
    <location>
        <position position="347"/>
    </location>
    <ligand>
        <name>NAD(+)</name>
        <dbReference type="ChEBI" id="CHEBI:57540"/>
    </ligand>
</feature>
<feature type="binding site" evidence="1">
    <location>
        <position position="375"/>
    </location>
    <ligand>
        <name>NAD(+)</name>
        <dbReference type="ChEBI" id="CHEBI:57540"/>
    </ligand>
</feature>
<feature type="sequence conflict" description="In Ref. 5; BAH20028." evidence="3" ref="5">
    <original>E</original>
    <variation>G</variation>
    <location>
        <position position="316"/>
    </location>
</feature>
<evidence type="ECO:0000250" key="1"/>
<evidence type="ECO:0000269" key="2">
    <source>
    </source>
</evidence>
<evidence type="ECO:0000305" key="3"/>
<sequence>MVGSIEAKSLQSNGSVHHIGLNLEEKLDEFRRLLGKSEKDPLRIVSVGAGAWGSVFAALLQESYGGFRDKFQIRIWRRAGRAVDRETAEHLFEVINSREDILRRLIRRCAYLKYVEARLGDRTLYADEILKDGFCLNMVDTPLCPLKVVTNLQEAVWDADIVVNGLPSTETREVFEEISKYWKERITVPIIISLSKGIETALEPVPHIITPTKMIHQATGVPIDNVLYLGGPNIAAEIYNKEYANARICGAAKWRKPLAKFLRQPHFIVWDNSDLVTHEVMGGLKNVYAIGAGMVAALTNESATSKSVYFAHCTSEMIFITHLLAEEPEKLAGPLLADTYVTLLKGRNAWYGQMLAKGEINRDMGDSISGKGMIQGVSAVGAFYQLLSQSSLSILPSEEKKPVAPVESCPILKTLYKILITREQSTQAILQALRDETLNDPRDRIEIAQSHAFYRPSLLGQP</sequence>